<comment type="function">
    <text evidence="1 6 7 10 11 12">Multifunctional protein that plays a critical role in regulating the availability of IGFs to their receptors and thereby regulates IGF-mediated cellular processes including proliferation, differentiation, and apoptosis in a cell-type specific manner (PubMed:18930415, PubMed:7683690). Increases the cell proliferation of osteoblasts, intestinal smooth muscle cells and neuroblastoma cells. Enhances adhesion and survival of epithelial cells but decreases adhesion of mesenchymal cells (By similarity). Once secreted, acts as a major mediator of mTORC1-dependent feedback inhibition of IGF1 signaling (By similarity). Also plays a role in the induction of extracellular matrix (ECM) production and deposition independently of its nuclear translocation and binding to IGFs (PubMed:20345844, PubMed:26103640). Acts itself as a growth factor that can act independently of IGFs to regulate bone formation. Acts as a ligand for the ROR1 receptor which triggers formation of ROR1/HER2 heterodimer to enhance CREB oncogenic signaling (PubMed:36949068).</text>
</comment>
<comment type="subunit">
    <text evidence="7 10 12">Interacts with IGF1; this interaction enhances the growth stimulatory effects of IGF1 on fibroblasts (PubMed:7683690). Interacts with CAV1; this interaction allows trafficking of IGFBP5 from the plasma membrane to the nucleus (PubMed:20345844). Interacts with NCL; this interaction is necessary for IGFBP5 localization to the nucleus (PubMed:26103640).</text>
</comment>
<comment type="interaction">
    <interactant intactId="EBI-720480">
        <id>P24593</id>
    </interactant>
    <interactant intactId="EBI-7131019">
        <id>Q8TB40</id>
        <label>ABHD4</label>
    </interactant>
    <organismsDiffer>false</organismsDiffer>
    <experiments>3</experiments>
</comment>
<comment type="interaction">
    <interactant intactId="EBI-720480">
        <id>P24593</id>
    </interactant>
    <interactant intactId="EBI-12078468">
        <id>Q8IVF2-3</id>
        <label>AHNAK2</label>
    </interactant>
    <organismsDiffer>false</organismsDiffer>
    <experiments>3</experiments>
</comment>
<comment type="interaction">
    <interactant intactId="EBI-720480">
        <id>P24593</id>
    </interactant>
    <interactant intactId="EBI-19125216">
        <id>Q86WK6</id>
        <label>AMIGO1</label>
    </interactant>
    <organismsDiffer>false</organismsDiffer>
    <experiments>3</experiments>
</comment>
<comment type="interaction">
    <interactant intactId="EBI-720480">
        <id>P24593</id>
    </interactant>
    <interactant intactId="EBI-7054139">
        <id>Q68DC2</id>
        <label>ANKS6</label>
    </interactant>
    <organismsDiffer>false</organismsDiffer>
    <experiments>3</experiments>
</comment>
<comment type="interaction">
    <interactant intactId="EBI-720480">
        <id>P24593</id>
    </interactant>
    <interactant intactId="EBI-2606935">
        <id>Q96BI3</id>
        <label>APH1A</label>
    </interactant>
    <organismsDiffer>false</organismsDiffer>
    <experiments>3</experiments>
</comment>
<comment type="interaction">
    <interactant intactId="EBI-720480">
        <id>P24593</id>
    </interactant>
    <interactant intactId="EBI-12701138">
        <id>P41181</id>
        <label>AQP2</label>
    </interactant>
    <organismsDiffer>false</organismsDiffer>
    <experiments>3</experiments>
</comment>
<comment type="interaction">
    <interactant intactId="EBI-720480">
        <id>P24593</id>
    </interactant>
    <interactant intactId="EBI-13059134">
        <id>Q13520</id>
        <label>AQP6</label>
    </interactant>
    <organismsDiffer>false</organismsDiffer>
    <experiments>3</experiments>
</comment>
<comment type="interaction">
    <interactant intactId="EBI-720480">
        <id>P24593</id>
    </interactant>
    <interactant intactId="EBI-17444777">
        <id>O43315</id>
        <label>AQP9</label>
    </interactant>
    <organismsDiffer>false</organismsDiffer>
    <experiments>3</experiments>
</comment>
<comment type="interaction">
    <interactant intactId="EBI-720480">
        <id>P24593</id>
    </interactant>
    <interactant intactId="EBI-1172335">
        <id>P07306</id>
        <label>ASGR1</label>
    </interactant>
    <organismsDiffer>false</organismsDiffer>
    <experiments>3</experiments>
</comment>
<comment type="interaction">
    <interactant intactId="EBI-720480">
        <id>P24593</id>
    </interactant>
    <interactant intactId="EBI-7996695">
        <id>Q8WZ55</id>
        <label>BSND</label>
    </interactant>
    <organismsDiffer>false</organismsDiffer>
    <experiments>3</experiments>
</comment>
<comment type="interaction">
    <interactant intactId="EBI-720480">
        <id>P24593</id>
    </interactant>
    <interactant intactId="EBI-6657396">
        <id>P19397</id>
        <label>CD53</label>
    </interactant>
    <organismsDiffer>false</organismsDiffer>
    <experiments>3</experiments>
</comment>
<comment type="interaction">
    <interactant intactId="EBI-720480">
        <id>P24593</id>
    </interactant>
    <interactant intactId="EBI-2622997">
        <id>Q9HA82</id>
        <label>CERS4</label>
    </interactant>
    <organismsDiffer>false</organismsDiffer>
    <experiments>3</experiments>
</comment>
<comment type="interaction">
    <interactant intactId="EBI-720480">
        <id>P24593</id>
    </interactant>
    <interactant intactId="EBI-17447707">
        <id>Q9H9P2</id>
        <label>CHODL</label>
    </interactant>
    <organismsDiffer>false</organismsDiffer>
    <experiments>3</experiments>
</comment>
<comment type="interaction">
    <interactant intactId="EBI-720480">
        <id>P24593</id>
    </interactant>
    <interactant intactId="EBI-751440">
        <id>P57739</id>
        <label>CLDN2</label>
    </interactant>
    <organismsDiffer>false</organismsDiffer>
    <experiments>3</experiments>
</comment>
<comment type="interaction">
    <interactant intactId="EBI-720480">
        <id>P24593</id>
    </interactant>
    <interactant intactId="EBI-23801559">
        <id>P56880</id>
        <label>CLDN20</label>
    </interactant>
    <organismsDiffer>false</organismsDiffer>
    <experiments>3</experiments>
</comment>
<comment type="interaction">
    <interactant intactId="EBI-720480">
        <id>P24593</id>
    </interactant>
    <interactant intactId="EBI-12955011">
        <id>P56747</id>
        <label>CLDN6</label>
    </interactant>
    <organismsDiffer>false</organismsDiffer>
    <experiments>3</experiments>
</comment>
<comment type="interaction">
    <interactant intactId="EBI-720480">
        <id>P24593</id>
    </interactant>
    <interactant intactId="EBI-740744">
        <id>O95471</id>
        <label>CLDN7</label>
    </interactant>
    <organismsDiffer>false</organismsDiffer>
    <experiments>3</experiments>
</comment>
<comment type="interaction">
    <interactant intactId="EBI-720480">
        <id>P24593</id>
    </interactant>
    <interactant intactId="EBI-18341636">
        <id>O95484</id>
        <label>CLDN9</label>
    </interactant>
    <organismsDiffer>false</organismsDiffer>
    <experiments>3</experiments>
</comment>
<comment type="interaction">
    <interactant intactId="EBI-720480">
        <id>P24593</id>
    </interactant>
    <interactant intactId="EBI-11977093">
        <id>Q6ZS10</id>
        <label>CLEC17A</label>
    </interactant>
    <organismsDiffer>false</organismsDiffer>
    <experiments>4</experiments>
</comment>
<comment type="interaction">
    <interactant intactId="EBI-720480">
        <id>P24593</id>
    </interactant>
    <interactant intactId="EBI-625022">
        <id>O43889-2</id>
        <label>CREB3</label>
    </interactant>
    <organismsDiffer>false</organismsDiffer>
    <experiments>4</experiments>
</comment>
<comment type="interaction">
    <interactant intactId="EBI-720480">
        <id>P24593</id>
    </interactant>
    <interactant intactId="EBI-3905522">
        <id>P25024</id>
        <label>CXCR1</label>
    </interactant>
    <organismsDiffer>false</organismsDiffer>
    <experiments>3</experiments>
</comment>
<comment type="interaction">
    <interactant intactId="EBI-720480">
        <id>P24593</id>
    </interactant>
    <interactant intactId="EBI-11037623">
        <id>Q9NYP7</id>
        <label>ELOVL5</label>
    </interactant>
    <organismsDiffer>false</organismsDiffer>
    <experiments>3</experiments>
</comment>
<comment type="interaction">
    <interactant intactId="EBI-720480">
        <id>P24593</id>
    </interactant>
    <interactant intactId="EBI-781551">
        <id>Q9Y282</id>
        <label>ERGIC3</label>
    </interactant>
    <organismsDiffer>false</organismsDiffer>
    <experiments>3</experiments>
</comment>
<comment type="interaction">
    <interactant intactId="EBI-720480">
        <id>P24593</id>
    </interactant>
    <interactant intactId="EBI-18304435">
        <id>Q5JX71</id>
        <label>FAM209A</label>
    </interactant>
    <organismsDiffer>false</organismsDiffer>
    <experiments>3</experiments>
</comment>
<comment type="interaction">
    <interactant intactId="EBI-720480">
        <id>P24593</id>
    </interactant>
    <interactant intactId="EBI-17443171">
        <id>Q96P31-6</id>
        <label>FCRL3</label>
    </interactant>
    <organismsDiffer>false</organismsDiffer>
    <experiments>3</experiments>
</comment>
<comment type="interaction">
    <interactant intactId="EBI-720480">
        <id>P24593</id>
    </interactant>
    <interactant intactId="EBI-12142257">
        <id>Q8TBE3</id>
        <label>FNDC9</label>
    </interactant>
    <organismsDiffer>false</organismsDiffer>
    <experiments>3</experiments>
</comment>
<comment type="interaction">
    <interactant intactId="EBI-720480">
        <id>P24593</id>
    </interactant>
    <interactant intactId="EBI-750433">
        <id>P36382</id>
        <label>GJA5</label>
    </interactant>
    <organismsDiffer>false</organismsDiffer>
    <experiments>3</experiments>
</comment>
<comment type="interaction">
    <interactant intactId="EBI-720480">
        <id>P24593</id>
    </interactant>
    <interactant intactId="EBI-17458373">
        <id>P48165</id>
        <label>GJA8</label>
    </interactant>
    <organismsDiffer>false</organismsDiffer>
    <experiments>3</experiments>
</comment>
<comment type="interaction">
    <interactant intactId="EBI-720480">
        <id>P24593</id>
    </interactant>
    <interactant intactId="EBI-3908586">
        <id>O75712</id>
        <label>GJB3</label>
    </interactant>
    <organismsDiffer>false</organismsDiffer>
    <experiments>3</experiments>
</comment>
<comment type="interaction">
    <interactant intactId="EBI-720480">
        <id>P24593</id>
    </interactant>
    <interactant intactId="EBI-3909454">
        <id>O95377</id>
        <label>GJB5</label>
    </interactant>
    <organismsDiffer>false</organismsDiffer>
    <experiments>3</experiments>
</comment>
<comment type="interaction">
    <interactant intactId="EBI-720480">
        <id>P24593</id>
    </interactant>
    <interactant intactId="EBI-712073">
        <id>Q8NBJ4</id>
        <label>GOLM1</label>
    </interactant>
    <organismsDiffer>false</organismsDiffer>
    <experiments>3</experiments>
</comment>
<comment type="interaction">
    <interactant intactId="EBI-720480">
        <id>P24593</id>
    </interactant>
    <interactant intactId="EBI-11955647">
        <id>Q8TDV0</id>
        <label>GPR151</label>
    </interactant>
    <organismsDiffer>false</organismsDiffer>
    <experiments>3</experiments>
</comment>
<comment type="interaction">
    <interactant intactId="EBI-720480">
        <id>P24593</id>
    </interactant>
    <interactant intactId="EBI-13345167">
        <id>Q8TDT2</id>
        <label>GPR152</label>
    </interactant>
    <organismsDiffer>false</organismsDiffer>
    <experiments>3</experiments>
</comment>
<comment type="interaction">
    <interactant intactId="EBI-720480">
        <id>P24593</id>
    </interactant>
    <interactant intactId="EBI-2927498">
        <id>O60883</id>
        <label>GPR37L1</label>
    </interactant>
    <organismsDiffer>false</organismsDiffer>
    <experiments>3</experiments>
</comment>
<comment type="interaction">
    <interactant intactId="EBI-720480">
        <id>P24593</id>
    </interactant>
    <interactant intactId="EBI-18076404">
        <id>O15529</id>
        <label>GPR42</label>
    </interactant>
    <organismsDiffer>false</organismsDiffer>
    <experiments>3</experiments>
</comment>
<comment type="interaction">
    <interactant intactId="EBI-720480">
        <id>P24593</id>
    </interactant>
    <interactant intactId="EBI-13067820">
        <id>Q9NZD1</id>
        <label>GPRC5D</label>
    </interactant>
    <organismsDiffer>false</organismsDiffer>
    <experiments>3</experiments>
</comment>
<comment type="interaction">
    <interactant intactId="EBI-720480">
        <id>P24593</id>
    </interactant>
    <interactant intactId="EBI-11721746">
        <id>Q8TED1</id>
        <label>GPX8</label>
    </interactant>
    <organismsDiffer>false</organismsDiffer>
    <experiments>3</experiments>
</comment>
<comment type="interaction">
    <interactant intactId="EBI-720480">
        <id>P24593</id>
    </interactant>
    <interactant intactId="EBI-18053395">
        <id>Q7Z5P4</id>
        <label>HSD17B13</label>
    </interactant>
    <organismsDiffer>false</organismsDiffer>
    <experiments>3</experiments>
</comment>
<comment type="interaction">
    <interactant intactId="EBI-720480">
        <id>P24593</id>
    </interactant>
    <interactant intactId="EBI-3934936">
        <id>O95279</id>
        <label>KCNK5</label>
    </interactant>
    <organismsDiffer>false</organismsDiffer>
    <experiments>3</experiments>
</comment>
<comment type="interaction">
    <interactant intactId="EBI-720480">
        <id>P24593</id>
    </interactant>
    <interactant intactId="EBI-2866116">
        <id>Q8IYS2</id>
        <label>KIAA2013</label>
    </interactant>
    <organismsDiffer>false</organismsDiffer>
    <experiments>3</experiments>
</comment>
<comment type="interaction">
    <interactant intactId="EBI-720480">
        <id>P24593</id>
    </interactant>
    <interactant intactId="EBI-3267258">
        <id>Q86VI4</id>
        <label>LAPTM4B</label>
    </interactant>
    <organismsDiffer>false</organismsDiffer>
    <experiments>3</experiments>
</comment>
<comment type="interaction">
    <interactant intactId="EBI-720480">
        <id>P24593</id>
    </interactant>
    <interactant intactId="EBI-19944128">
        <id>Q6UX15-2</id>
        <label>LAYN</label>
    </interactant>
    <organismsDiffer>false</organismsDiffer>
    <experiments>3</experiments>
</comment>
<comment type="interaction">
    <interactant intactId="EBI-720480">
        <id>P24593</id>
    </interactant>
    <interactant intactId="EBI-10173166">
        <id>Q5T700</id>
        <label>LDLRAD1</label>
    </interactant>
    <organismsDiffer>false</organismsDiffer>
    <experiments>3</experiments>
</comment>
<comment type="interaction">
    <interactant intactId="EBI-720480">
        <id>P24593</id>
    </interactant>
    <interactant intactId="EBI-18268016">
        <id>Q86WI0</id>
        <label>LHFPL1</label>
    </interactant>
    <organismsDiffer>false</organismsDiffer>
    <experiments>3</experiments>
</comment>
<comment type="interaction">
    <interactant intactId="EBI-720480">
        <id>P24593</id>
    </interactant>
    <interactant intactId="EBI-11956541">
        <id>Q9GZY8-5</id>
        <label>MFF</label>
    </interactant>
    <organismsDiffer>false</organismsDiffer>
    <experiments>3</experiments>
</comment>
<comment type="interaction">
    <interactant intactId="EBI-720480">
        <id>P24593</id>
    </interactant>
    <interactant intactId="EBI-3920969">
        <id>Q6N075</id>
        <label>MFSD5</label>
    </interactant>
    <organismsDiffer>false</organismsDiffer>
    <experiments>3</experiments>
</comment>
<comment type="interaction">
    <interactant intactId="EBI-720480">
        <id>P24593</id>
    </interactant>
    <interactant intactId="EBI-750085">
        <id>Q9Y676</id>
        <label>MRPS18B</label>
    </interactant>
    <organismsDiffer>false</organismsDiffer>
    <experiments>3</experiments>
</comment>
<comment type="interaction">
    <interactant intactId="EBI-720480">
        <id>P24593</id>
    </interactant>
    <interactant intactId="EBI-12806656">
        <id>Q96HJ5</id>
        <label>MS4A3</label>
    </interactant>
    <organismsDiffer>false</organismsDiffer>
    <experiments>3</experiments>
</comment>
<comment type="interaction">
    <interactant intactId="EBI-720480">
        <id>P24593</id>
    </interactant>
    <interactant intactId="EBI-721391">
        <id>Q9GZW8</id>
        <label>MS4A7</label>
    </interactant>
    <organismsDiffer>false</organismsDiffer>
    <experiments>3</experiments>
</comment>
<comment type="interaction">
    <interactant intactId="EBI-720480">
        <id>P24593</id>
    </interactant>
    <interactant intactId="EBI-10247000">
        <id>Q6IBW4-4</id>
        <label>NCAPH2</label>
    </interactant>
    <organismsDiffer>false</organismsDiffer>
    <experiments>3</experiments>
</comment>
<comment type="interaction">
    <interactant intactId="EBI-720480">
        <id>P24593</id>
    </interactant>
    <interactant intactId="EBI-716063">
        <id>Q13113</id>
        <label>PDZK1IP1</label>
    </interactant>
    <organismsDiffer>false</organismsDiffer>
    <experiments>3</experiments>
</comment>
<comment type="interaction">
    <interactant intactId="EBI-720480">
        <id>P24593</id>
    </interactant>
    <interactant intactId="EBI-12902928">
        <id>Q8NFJ6</id>
        <label>PROKR2</label>
    </interactant>
    <organismsDiffer>false</organismsDiffer>
    <experiments>3</experiments>
</comment>
<comment type="interaction">
    <interactant intactId="EBI-720480">
        <id>P24593</id>
    </interactant>
    <interactant intactId="EBI-15853497">
        <id>Q9UBD6</id>
        <label>RHCG</label>
    </interactant>
    <organismsDiffer>false</organismsDiffer>
    <experiments>3</experiments>
</comment>
<comment type="interaction">
    <interactant intactId="EBI-720480">
        <id>P24593</id>
    </interactant>
    <interactant intactId="EBI-18159983">
        <id>Q3KNW5</id>
        <label>SLC10A6</label>
    </interactant>
    <organismsDiffer>false</organismsDiffer>
    <experiments>3</experiments>
</comment>
<comment type="interaction">
    <interactant intactId="EBI-720480">
        <id>P24593</id>
    </interactant>
    <interactant intactId="EBI-12808018">
        <id>Q9UKG4</id>
        <label>SLC13A4</label>
    </interactant>
    <organismsDiffer>false</organismsDiffer>
    <experiments>3</experiments>
</comment>
<comment type="interaction">
    <interactant intactId="EBI-720480">
        <id>P24593</id>
    </interactant>
    <interactant intactId="EBI-9978441">
        <id>Q9H2H9</id>
        <label>SLC38A1</label>
    </interactant>
    <organismsDiffer>false</organismsDiffer>
    <experiments>4</experiments>
</comment>
<comment type="interaction">
    <interactant intactId="EBI-720480">
        <id>P24593</id>
    </interactant>
    <interactant intactId="EBI-10290130">
        <id>Q96JW4</id>
        <label>SLC41A2</label>
    </interactant>
    <organismsDiffer>false</organismsDiffer>
    <experiments>3</experiments>
</comment>
<comment type="interaction">
    <interactant intactId="EBI-720480">
        <id>P24593</id>
    </interactant>
    <interactant intactId="EBI-7225508">
        <id>Q96GZ6</id>
        <label>SLC41A3</label>
    </interactant>
    <organismsDiffer>false</organismsDiffer>
    <experiments>3</experiments>
</comment>
<comment type="interaction">
    <interactant intactId="EBI-720480">
        <id>P24593</id>
    </interactant>
    <interactant intactId="EBI-10819434">
        <id>Q9NPE6</id>
        <label>SPAG4</label>
    </interactant>
    <organismsDiffer>false</organismsDiffer>
    <experiments>3</experiments>
</comment>
<comment type="interaction">
    <interactant intactId="EBI-720480">
        <id>P24593</id>
    </interactant>
    <interactant intactId="EBI-12099160">
        <id>Q8N205-2</id>
        <label>SYNE4</label>
    </interactant>
    <organismsDiffer>false</organismsDiffer>
    <experiments>3</experiments>
</comment>
<comment type="interaction">
    <interactant intactId="EBI-720480">
        <id>P24593</id>
    </interactant>
    <interactant intactId="EBI-726691">
        <id>Q8WY91</id>
        <label>THAP4</label>
    </interactant>
    <organismsDiffer>false</organismsDiffer>
    <experiments>3</experiments>
</comment>
<comment type="interaction">
    <interactant intactId="EBI-720480">
        <id>P24593</id>
    </interactant>
    <interactant intactId="EBI-12947623">
        <id>Q96MV1</id>
        <label>TLCD4</label>
    </interactant>
    <organismsDiffer>false</organismsDiffer>
    <experiments>3</experiments>
</comment>
<comment type="interaction">
    <interactant intactId="EBI-720480">
        <id>P24593</id>
    </interactant>
    <interactant intactId="EBI-3915978">
        <id>Q96A25</id>
        <label>TMEM106A</label>
    </interactant>
    <organismsDiffer>false</organismsDiffer>
    <experiments>3</experiments>
</comment>
<comment type="interaction">
    <interactant intactId="EBI-720480">
        <id>P24593</id>
    </interactant>
    <interactant intactId="EBI-2821497">
        <id>Q9BVX2</id>
        <label>TMEM106C</label>
    </interactant>
    <organismsDiffer>false</organismsDiffer>
    <experiments>3</experiments>
</comment>
<comment type="interaction">
    <interactant intactId="EBI-720480">
        <id>P24593</id>
    </interactant>
    <interactant intactId="EBI-11724423">
        <id>Q7Z7N9</id>
        <label>TMEM179B</label>
    </interactant>
    <organismsDiffer>false</organismsDiffer>
    <experiments>3</experiments>
</comment>
<comment type="interaction">
    <interactant intactId="EBI-720480">
        <id>P24593</id>
    </interactant>
    <interactant intactId="EBI-10982110">
        <id>Q96Q45-2</id>
        <label>TMEM237</label>
    </interactant>
    <organismsDiffer>false</organismsDiffer>
    <experiments>5</experiments>
</comment>
<comment type="interaction">
    <interactant intactId="EBI-720480">
        <id>P24593</id>
    </interactant>
    <interactant intactId="EBI-10823938">
        <id>Q9NWC5</id>
        <label>TMEM45A</label>
    </interactant>
    <organismsDiffer>false</organismsDiffer>
    <experiments>3</experiments>
</comment>
<comment type="interaction">
    <interactant intactId="EBI-720480">
        <id>P24593</id>
    </interactant>
    <interactant intactId="EBI-18178701">
        <id>Q4KMG9</id>
        <label>TMEM52B</label>
    </interactant>
    <organismsDiffer>false</organismsDiffer>
    <experiments>3</experiments>
</comment>
<comment type="interaction">
    <interactant intactId="EBI-720480">
        <id>P24593</id>
    </interactant>
    <interactant intactId="EBI-12345267">
        <id>O15393-2</id>
        <label>TMPRSS2</label>
    </interactant>
    <organismsDiffer>false</organismsDiffer>
    <experiments>3</experiments>
</comment>
<comment type="interaction">
    <interactant intactId="EBI-720480">
        <id>P24593</id>
    </interactant>
    <interactant intactId="EBI-6447886">
        <id>Q9Y320</id>
        <label>TMX2</label>
    </interactant>
    <organismsDiffer>false</organismsDiffer>
    <experiments>3</experiments>
</comment>
<comment type="interaction">
    <interactant intactId="EBI-720480">
        <id>P24593</id>
    </interactant>
    <interactant intactId="EBI-2466403">
        <id>O95859</id>
        <label>TSPAN12</label>
    </interactant>
    <organismsDiffer>false</organismsDiffer>
    <experiments>3</experiments>
</comment>
<comment type="interaction">
    <interactant intactId="EBI-720480">
        <id>P24593</id>
    </interactant>
    <interactant intactId="EBI-12195249">
        <id>Q5TGU0</id>
        <label>TSPO2</label>
    </interactant>
    <organismsDiffer>false</organismsDiffer>
    <experiments>3</experiments>
</comment>
<comment type="subcellular location">
    <subcellularLocation>
        <location evidence="6 7">Secreted</location>
    </subcellularLocation>
    <subcellularLocation>
        <location evidence="7 10">Cytoplasm</location>
    </subcellularLocation>
    <subcellularLocation>
        <location evidence="7 10">Nucleus</location>
    </subcellularLocation>
</comment>
<comment type="tissue specificity">
    <text>Osteosarcoma, and at lower levels in liver, kidney and brain.</text>
</comment>
<comment type="PTM">
    <text evidence="6">Cleaved by C1S in extracellular space.</text>
</comment>
<gene>
    <name type="primary">IGFBP5</name>
    <name type="synonym">IBP5</name>
</gene>
<proteinExistence type="evidence at protein level"/>
<reference key="1">
    <citation type="journal article" date="1991" name="Biochem. Biophys. Res. Commun.">
        <title>Molecular cloning of a new human insulin-like growth factor binding protein.</title>
        <authorList>
            <person name="Kiefer M.C."/>
            <person name="Ioh R.S."/>
            <person name="Bauer D.M."/>
            <person name="Zapf J."/>
        </authorList>
    </citation>
    <scope>NUCLEOTIDE SEQUENCE [MRNA]</scope>
    <source>
        <tissue>Osteosarcoma</tissue>
    </source>
</reference>
<reference key="2">
    <citation type="journal article" date="1991" name="J. Biol. Chem.">
        <title>Identification of five different insulin-like growth factor binding proteins (IGFBPs) from adult rat serum and molecular cloning of a novel IGFBP-5 in rat and human.</title>
        <authorList>
            <person name="Shimasaki S."/>
            <person name="Shimonaka M."/>
            <person name="Zhang H.-P."/>
            <person name="Ling N."/>
        </authorList>
    </citation>
    <scope>NUCLEOTIDE SEQUENCE [MRNA]</scope>
    <source>
        <tissue>Placenta</tissue>
    </source>
</reference>
<reference key="3">
    <citation type="journal article" date="1994" name="J. Biol. Chem.">
        <title>Characterization of the chromosomal gene and promoter for human insulin-like growth factor binding protein-5.</title>
        <authorList>
            <person name="Allander S.V."/>
            <person name="Larsson C."/>
            <person name="Ehrenborg E."/>
            <person name="Suwanichkul A."/>
            <person name="Weber G."/>
            <person name="Morris S.L."/>
            <person name="Bajalica S."/>
            <person name="Kiefer M.C."/>
            <person name="Luthman H."/>
            <person name="Powell D.R."/>
        </authorList>
    </citation>
    <scope>NUCLEOTIDE SEQUENCE [GENOMIC DNA]</scope>
</reference>
<reference key="4">
    <citation type="submission" date="1998-03" db="EMBL/GenBank/DDBJ databases">
        <authorList>
            <person name="Yu W."/>
            <person name="Gibbs R.A."/>
        </authorList>
    </citation>
    <scope>NUCLEOTIDE SEQUENCE [LARGE SCALE MRNA]</scope>
    <source>
        <tissue>Brain</tissue>
    </source>
</reference>
<reference key="5">
    <citation type="submission" date="2004-10" db="EMBL/GenBank/DDBJ databases">
        <title>Cloning of human full-length CDSs in BD Creator(TM) system donor vector.</title>
        <authorList>
            <person name="Kalnine N."/>
            <person name="Chen X."/>
            <person name="Rolfs A."/>
            <person name="Halleck A."/>
            <person name="Hines L."/>
            <person name="Eisenstein S."/>
            <person name="Koundinya M."/>
            <person name="Raphael J."/>
            <person name="Moreira D."/>
            <person name="Kelley T."/>
            <person name="LaBaer J."/>
            <person name="Lin Y."/>
            <person name="Phelan M."/>
            <person name="Farmer A."/>
        </authorList>
    </citation>
    <scope>NUCLEOTIDE SEQUENCE [LARGE SCALE MRNA]</scope>
</reference>
<reference key="6">
    <citation type="submission" date="2004-01" db="EMBL/GenBank/DDBJ databases">
        <authorList>
            <consortium name="NIEHS SNPs program"/>
        </authorList>
    </citation>
    <scope>NUCLEOTIDE SEQUENCE [GENOMIC DNA]</scope>
    <scope>VARIANT TRP-138</scope>
</reference>
<reference key="7">
    <citation type="journal article" date="2004" name="Genome Res.">
        <title>The status, quality, and expansion of the NIH full-length cDNA project: the Mammalian Gene Collection (MGC).</title>
        <authorList>
            <consortium name="The MGC Project Team"/>
        </authorList>
    </citation>
    <scope>NUCLEOTIDE SEQUENCE [LARGE SCALE MRNA]</scope>
    <source>
        <tissue>Brain</tissue>
    </source>
</reference>
<reference key="8">
    <citation type="journal article" date="1991" name="Biochem. Biophys. Res. Commun.">
        <title>A novel human insulin-like growth factor binding protein secreted by osteoblast-like cells.</title>
        <authorList>
            <person name="Andress D.L."/>
            <person name="Birnbaum R.S."/>
        </authorList>
    </citation>
    <scope>PROTEIN SEQUENCE OF 24-43</scope>
</reference>
<reference key="9">
    <citation type="journal article" date="1993" name="J. Cell Biol.">
        <title>Extracellular matrix contains insulin-like growth factor binding protein-5: potentiation of the effects of IGF-I.</title>
        <authorList>
            <person name="Jones J.I."/>
            <person name="Gockerman A."/>
            <person name="Busby W.H. Jr."/>
            <person name="Camacho-Hubner C."/>
            <person name="Clemmons D.R."/>
        </authorList>
    </citation>
    <scope>FUNCTION</scope>
    <scope>INTERACTION WITH IGF1</scope>
</reference>
<reference key="10">
    <citation type="journal article" date="1998" name="FEBS Lett.">
        <title>Isolation and characterization of circulating 13-kDa C-terminal fragments of human insulin-like growth factor binding protein-5.</title>
        <authorList>
            <person name="Standker L."/>
            <person name="Wobst P."/>
            <person name="Mark S."/>
            <person name="Forssmann W.-G."/>
        </authorList>
    </citation>
    <scope>PROTEIN SEQUENCE OF 141-178 AND 209-223</scope>
    <scope>GLYCOSYLATION AT THR-172</scope>
    <source>
        <tissue>Plasma</tissue>
    </source>
</reference>
<reference key="11">
    <citation type="journal article" date="2009" name="Osteoarthritis Cartilage">
        <title>Complement 1s is the serine protease that cleaves IGFBP-5 in human osteoarthritic joint fluid.</title>
        <authorList>
            <person name="Busby W.H. Jr."/>
            <person name="Yocum S.A."/>
            <person name="Rowland M."/>
            <person name="Kellner D."/>
            <person name="Lazerwith S."/>
            <person name="Sverdrup F."/>
            <person name="Yates M."/>
            <person name="Radabaugh M."/>
            <person name="Clemmons D.R."/>
        </authorList>
    </citation>
    <scope>FUNCTION</scope>
    <scope>CLEAVAGE BY C1S</scope>
    <scope>SUBCELLULAR LOCATION</scope>
</reference>
<reference key="12">
    <citation type="journal article" date="2011" name="J. Cell. Mol. Med.">
        <title>Decreased caveolin-1 levels contribute to fibrosis and deposition of extracellular IGFBP-5.</title>
        <authorList>
            <person name="Yamaguchi Y."/>
            <person name="Yasuoka H."/>
            <person name="Stolz D.B."/>
            <person name="Feghali-Bostwick C.A."/>
        </authorList>
    </citation>
    <scope>FUNCTION</scope>
    <scope>INTERACTION WITH CAV1</scope>
    <scope>SUBCELLULAR LOCATION</scope>
</reference>
<reference key="13">
    <citation type="journal article" date="2012" name="J. Biol. Chem.">
        <title>Defining the disulfide bonds of insulin-like growth factor-binding protein-5 by tandem mass spectrometry with electron transfer dissociation and collision-induced dissociation.</title>
        <authorList>
            <person name="Nili M."/>
            <person name="Mukherjee A."/>
            <person name="Shinde U."/>
            <person name="David L."/>
            <person name="Rotwein P."/>
        </authorList>
    </citation>
    <scope>DISULFIDE BONDS</scope>
    <scope>IDENTIFICATION BY MASS SPECTROMETRY</scope>
</reference>
<reference key="14">
    <citation type="journal article" date="2015" name="Cell">
        <title>A single kinase generates the majority of the secreted phosphoproteome.</title>
        <authorList>
            <person name="Tagliabracci V.S."/>
            <person name="Wiley S.E."/>
            <person name="Guo X."/>
            <person name="Kinch L.N."/>
            <person name="Durrant E."/>
            <person name="Wen J."/>
            <person name="Xiao J."/>
            <person name="Cui J."/>
            <person name="Nguyen K.B."/>
            <person name="Engel J.L."/>
            <person name="Coon J.J."/>
            <person name="Grishin N."/>
            <person name="Pinna L.A."/>
            <person name="Pagliarini D.J."/>
            <person name="Dixon J.E."/>
        </authorList>
    </citation>
    <scope>PHOSPHORYLATION AT SER-116</scope>
</reference>
<reference key="15">
    <citation type="journal article" date="2015" name="PLoS ONE">
        <title>IGFBP-5 Promotes Fibrosis Independently of Its Translocation to the Nucleus and Its Interaction with Nucleolin and IGF.</title>
        <authorList>
            <person name="Su Y."/>
            <person name="Nishimoto T."/>
            <person name="Feghali-Bostwick C."/>
        </authorList>
    </citation>
    <scope>FUNCTION</scope>
    <scope>SUBCELLULAR LOCATION</scope>
    <scope>INTERACTION WITH NUCLEOLIN/NCL</scope>
</reference>
<reference key="16">
    <citation type="journal article" date="2023" name="Nat. Commun.">
        <title>IGFBP5 is an ROR1 ligand promoting glioblastoma invasion via ROR1/HER2-CREB signaling axis.</title>
        <authorList>
            <person name="Lin W."/>
            <person name="Niu R."/>
            <person name="Park S.M."/>
            <person name="Zou Y."/>
            <person name="Kim S.S."/>
            <person name="Xia X."/>
            <person name="Xing S."/>
            <person name="Yang Q."/>
            <person name="Sun X."/>
            <person name="Yuan Z."/>
            <person name="Zhou S."/>
            <person name="Zhang D."/>
            <person name="Kwon H.J."/>
            <person name="Park S."/>
            <person name="Il Kim C."/>
            <person name="Koo H."/>
            <person name="Liu Y."/>
            <person name="Wu H."/>
            <person name="Zheng M."/>
            <person name="Yoo H."/>
            <person name="Shi B."/>
            <person name="Park J.B."/>
            <person name="Yin J."/>
        </authorList>
    </citation>
    <scope>FUNCTION</scope>
    <scope>INTERACTION WITH ROR1</scope>
</reference>
<reference key="17">
    <citation type="journal article" date="1998" name="EMBO J.">
        <title>Structure of the IGF-binding domain of the insulin-like growth factor-binding protein-5 (IGFBP-5): implications for IGF and IGF-I receptor interactions.</title>
        <authorList>
            <person name="Kalus W."/>
            <person name="Zweckstetter M."/>
            <person name="Renner C."/>
            <person name="Sanchez Y."/>
            <person name="Georgescu J."/>
            <person name="Grol M."/>
            <person name="Demuth D."/>
            <person name="Schumacher R."/>
            <person name="Dony C."/>
            <person name="Lang K."/>
            <person name="Holak T.A."/>
        </authorList>
    </citation>
    <scope>STRUCTURE BY NMR OF 60-106</scope>
</reference>
<accession>P24593</accession>
<accession>Q5U0A3</accession>
<name>IBP5_HUMAN</name>
<organism>
    <name type="scientific">Homo sapiens</name>
    <name type="common">Human</name>
    <dbReference type="NCBI Taxonomy" id="9606"/>
    <lineage>
        <taxon>Eukaryota</taxon>
        <taxon>Metazoa</taxon>
        <taxon>Chordata</taxon>
        <taxon>Craniata</taxon>
        <taxon>Vertebrata</taxon>
        <taxon>Euteleostomi</taxon>
        <taxon>Mammalia</taxon>
        <taxon>Eutheria</taxon>
        <taxon>Euarchontoglires</taxon>
        <taxon>Primates</taxon>
        <taxon>Haplorrhini</taxon>
        <taxon>Catarrhini</taxon>
        <taxon>Hominidae</taxon>
        <taxon>Homo</taxon>
    </lineage>
</organism>
<dbReference type="EMBL" id="M65062">
    <property type="protein sequence ID" value="AAD04730.1"/>
    <property type="molecule type" value="mRNA"/>
</dbReference>
<dbReference type="EMBL" id="M62782">
    <property type="protein sequence ID" value="AAA53505.1"/>
    <property type="molecule type" value="mRNA"/>
</dbReference>
<dbReference type="EMBL" id="L27559">
    <property type="protein sequence ID" value="AAA72051.1"/>
    <property type="molecule type" value="Genomic_DNA"/>
</dbReference>
<dbReference type="EMBL" id="L27556">
    <property type="protein sequence ID" value="AAA72051.1"/>
    <property type="status" value="JOINED"/>
    <property type="molecule type" value="Genomic_DNA"/>
</dbReference>
<dbReference type="EMBL" id="L27557">
    <property type="protein sequence ID" value="AAA72051.1"/>
    <property type="status" value="JOINED"/>
    <property type="molecule type" value="Genomic_DNA"/>
</dbReference>
<dbReference type="EMBL" id="L27558">
    <property type="protein sequence ID" value="AAA72051.1"/>
    <property type="status" value="JOINED"/>
    <property type="molecule type" value="Genomic_DNA"/>
</dbReference>
<dbReference type="EMBL" id="AF055033">
    <property type="protein sequence ID" value="AAC09368.1"/>
    <property type="molecule type" value="mRNA"/>
</dbReference>
<dbReference type="EMBL" id="BT019706">
    <property type="protein sequence ID" value="AAV38512.1"/>
    <property type="molecule type" value="mRNA"/>
</dbReference>
<dbReference type="EMBL" id="BT019707">
    <property type="protein sequence ID" value="AAV38513.1"/>
    <property type="molecule type" value="mRNA"/>
</dbReference>
<dbReference type="EMBL" id="AY534685">
    <property type="protein sequence ID" value="AAS16353.1"/>
    <property type="molecule type" value="Genomic_DNA"/>
</dbReference>
<dbReference type="EMBL" id="BC011453">
    <property type="protein sequence ID" value="AAH11453.1"/>
    <property type="molecule type" value="mRNA"/>
</dbReference>
<dbReference type="CCDS" id="CCDS2405.1"/>
<dbReference type="PIR" id="A53748">
    <property type="entry name" value="A53748"/>
</dbReference>
<dbReference type="RefSeq" id="NP_000590.1">
    <property type="nucleotide sequence ID" value="NM_000599.4"/>
</dbReference>
<dbReference type="PDB" id="1BOE">
    <property type="method" value="NMR"/>
    <property type="chains" value="A=60-106"/>
</dbReference>
<dbReference type="PDB" id="1H59">
    <property type="method" value="X-ray"/>
    <property type="resolution" value="2.10 A"/>
    <property type="chains" value="B=60-112"/>
</dbReference>
<dbReference type="PDB" id="7UFG">
    <property type="method" value="EM"/>
    <property type="resolution" value="3.28 A"/>
    <property type="chains" value="C/D=21-272"/>
</dbReference>
<dbReference type="PDBsum" id="1BOE"/>
<dbReference type="PDBsum" id="1H59"/>
<dbReference type="PDBsum" id="7UFG"/>
<dbReference type="EMDB" id="EMD-26475"/>
<dbReference type="SMR" id="P24593"/>
<dbReference type="BioGRID" id="109709">
    <property type="interactions" value="123"/>
</dbReference>
<dbReference type="CORUM" id="P24593"/>
<dbReference type="DIP" id="DIP-48433N"/>
<dbReference type="FunCoup" id="P24593">
    <property type="interactions" value="149"/>
</dbReference>
<dbReference type="IntAct" id="P24593">
    <property type="interactions" value="104"/>
</dbReference>
<dbReference type="STRING" id="9606.ENSP00000233813"/>
<dbReference type="BindingDB" id="P24593"/>
<dbReference type="ChEMBL" id="CHEMBL2665"/>
<dbReference type="DrugBank" id="DB01277">
    <property type="generic name" value="Mecasermin"/>
</dbReference>
<dbReference type="MEROPS" id="I31.952"/>
<dbReference type="GlyCosmos" id="P24593">
    <property type="glycosylation" value="2 sites, 1 glycan"/>
</dbReference>
<dbReference type="GlyGen" id="P24593">
    <property type="glycosylation" value="5 sites, 3 O-linked glycans (5 sites)"/>
</dbReference>
<dbReference type="iPTMnet" id="P24593"/>
<dbReference type="PhosphoSitePlus" id="P24593"/>
<dbReference type="BioMuta" id="IGFBP5"/>
<dbReference type="DMDM" id="124069"/>
<dbReference type="MassIVE" id="P24593"/>
<dbReference type="PaxDb" id="9606-ENSP00000233813"/>
<dbReference type="PeptideAtlas" id="P24593"/>
<dbReference type="ProteomicsDB" id="54219"/>
<dbReference type="Pumba" id="P24593"/>
<dbReference type="Antibodypedia" id="3978">
    <property type="antibodies" value="450 antibodies from 39 providers"/>
</dbReference>
<dbReference type="DNASU" id="3488"/>
<dbReference type="Ensembl" id="ENST00000233813.5">
    <property type="protein sequence ID" value="ENSP00000233813.4"/>
    <property type="gene ID" value="ENSG00000115461.5"/>
</dbReference>
<dbReference type="GeneID" id="3488"/>
<dbReference type="KEGG" id="hsa:3488"/>
<dbReference type="MANE-Select" id="ENST00000233813.5">
    <property type="protein sequence ID" value="ENSP00000233813.4"/>
    <property type="RefSeq nucleotide sequence ID" value="NM_000599.4"/>
    <property type="RefSeq protein sequence ID" value="NP_000590.1"/>
</dbReference>
<dbReference type="UCSC" id="uc002vgj.5">
    <property type="organism name" value="human"/>
</dbReference>
<dbReference type="AGR" id="HGNC:5474"/>
<dbReference type="CTD" id="3488"/>
<dbReference type="DisGeNET" id="3488"/>
<dbReference type="GeneCards" id="IGFBP5"/>
<dbReference type="HGNC" id="HGNC:5474">
    <property type="gene designation" value="IGFBP5"/>
</dbReference>
<dbReference type="HPA" id="ENSG00000115461">
    <property type="expression patterns" value="Tissue enhanced (cervix, ovary)"/>
</dbReference>
<dbReference type="MIM" id="146734">
    <property type="type" value="gene"/>
</dbReference>
<dbReference type="neXtProt" id="NX_P24593"/>
<dbReference type="OpenTargets" id="ENSG00000115461"/>
<dbReference type="PharmGKB" id="PA29707"/>
<dbReference type="VEuPathDB" id="HostDB:ENSG00000115461"/>
<dbReference type="eggNOG" id="ENOG502QUPK">
    <property type="taxonomic scope" value="Eukaryota"/>
</dbReference>
<dbReference type="GeneTree" id="ENSGT00940000155890"/>
<dbReference type="HOGENOM" id="CLU_070833_1_1_1"/>
<dbReference type="InParanoid" id="P24593"/>
<dbReference type="OMA" id="YTERCAL"/>
<dbReference type="OrthoDB" id="6068400at2759"/>
<dbReference type="PAN-GO" id="P24593">
    <property type="GO annotations" value="5 GO annotations based on evolutionary models"/>
</dbReference>
<dbReference type="PhylomeDB" id="P24593"/>
<dbReference type="TreeFam" id="TF331211"/>
<dbReference type="BioCyc" id="MetaCyc:ENSG00000115461-MONOMER"/>
<dbReference type="PathwayCommons" id="P24593"/>
<dbReference type="Reactome" id="R-HSA-381426">
    <property type="pathway name" value="Regulation of Insulin-like Growth Factor (IGF) transport and uptake by Insulin-like Growth Factor Binding Proteins (IGFBPs)"/>
</dbReference>
<dbReference type="Reactome" id="R-HSA-8957275">
    <property type="pathway name" value="Post-translational protein phosphorylation"/>
</dbReference>
<dbReference type="SignaLink" id="P24593"/>
<dbReference type="SIGNOR" id="P24593"/>
<dbReference type="BioGRID-ORCS" id="3488">
    <property type="hits" value="15 hits in 1155 CRISPR screens"/>
</dbReference>
<dbReference type="ChiTaRS" id="IGFBP5">
    <property type="organism name" value="human"/>
</dbReference>
<dbReference type="EvolutionaryTrace" id="P24593"/>
<dbReference type="GeneWiki" id="IGFBP5"/>
<dbReference type="GenomeRNAi" id="3488"/>
<dbReference type="Pharos" id="P24593">
    <property type="development level" value="Tchem"/>
</dbReference>
<dbReference type="PRO" id="PR:P24593"/>
<dbReference type="Proteomes" id="UP000005640">
    <property type="component" value="Chromosome 2"/>
</dbReference>
<dbReference type="RNAct" id="P24593">
    <property type="molecule type" value="protein"/>
</dbReference>
<dbReference type="Bgee" id="ENSG00000115461">
    <property type="expression patterns" value="Expressed in renal medulla and 212 other cell types or tissues"/>
</dbReference>
<dbReference type="ExpressionAtlas" id="P24593">
    <property type="expression patterns" value="baseline and differential"/>
</dbReference>
<dbReference type="GO" id="GO:0005788">
    <property type="term" value="C:endoplasmic reticulum lumen"/>
    <property type="evidence" value="ECO:0000304"/>
    <property type="project" value="Reactome"/>
</dbReference>
<dbReference type="GO" id="GO:0005576">
    <property type="term" value="C:extracellular region"/>
    <property type="evidence" value="ECO:0000304"/>
    <property type="project" value="Reactome"/>
</dbReference>
<dbReference type="GO" id="GO:0005615">
    <property type="term" value="C:extracellular space"/>
    <property type="evidence" value="ECO:0000318"/>
    <property type="project" value="GO_Central"/>
</dbReference>
<dbReference type="GO" id="GO:0016942">
    <property type="term" value="C:insulin-like growth factor binding protein complex"/>
    <property type="evidence" value="ECO:0000305"/>
    <property type="project" value="BHF-UCL"/>
</dbReference>
<dbReference type="GO" id="GO:0042567">
    <property type="term" value="C:insulin-like growth factor ternary complex"/>
    <property type="evidence" value="ECO:0000314"/>
    <property type="project" value="BHF-UCL"/>
</dbReference>
<dbReference type="GO" id="GO:0005634">
    <property type="term" value="C:nucleus"/>
    <property type="evidence" value="ECO:0007669"/>
    <property type="project" value="UniProtKB-SubCell"/>
</dbReference>
<dbReference type="GO" id="GO:0001968">
    <property type="term" value="F:fibronectin binding"/>
    <property type="evidence" value="ECO:0000318"/>
    <property type="project" value="GO_Central"/>
</dbReference>
<dbReference type="GO" id="GO:0031994">
    <property type="term" value="F:insulin-like growth factor I binding"/>
    <property type="evidence" value="ECO:0000353"/>
    <property type="project" value="BHF-UCL"/>
</dbReference>
<dbReference type="GO" id="GO:0031995">
    <property type="term" value="F:insulin-like growth factor II binding"/>
    <property type="evidence" value="ECO:0000318"/>
    <property type="project" value="GO_Central"/>
</dbReference>
<dbReference type="GO" id="GO:0048018">
    <property type="term" value="F:receptor ligand activity"/>
    <property type="evidence" value="ECO:0000314"/>
    <property type="project" value="UniProt"/>
</dbReference>
<dbReference type="GO" id="GO:0008283">
    <property type="term" value="P:cell population proliferation"/>
    <property type="evidence" value="ECO:0000314"/>
    <property type="project" value="UniProt"/>
</dbReference>
<dbReference type="GO" id="GO:0071320">
    <property type="term" value="P:cellular response to cAMP"/>
    <property type="evidence" value="ECO:0000314"/>
    <property type="project" value="UniProtKB"/>
</dbReference>
<dbReference type="GO" id="GO:0007565">
    <property type="term" value="P:female pregnancy"/>
    <property type="evidence" value="ECO:0007669"/>
    <property type="project" value="Ensembl"/>
</dbReference>
<dbReference type="GO" id="GO:0042593">
    <property type="term" value="P:glucose homeostasis"/>
    <property type="evidence" value="ECO:0007669"/>
    <property type="project" value="Ensembl"/>
</dbReference>
<dbReference type="GO" id="GO:0031069">
    <property type="term" value="P:hair follicle morphogenesis"/>
    <property type="evidence" value="ECO:0007669"/>
    <property type="project" value="Ensembl"/>
</dbReference>
<dbReference type="GO" id="GO:0048009">
    <property type="term" value="P:insulin-like growth factor receptor signaling pathway"/>
    <property type="evidence" value="ECO:0007669"/>
    <property type="project" value="Ensembl"/>
</dbReference>
<dbReference type="GO" id="GO:0035556">
    <property type="term" value="P:intracellular signal transduction"/>
    <property type="evidence" value="ECO:0007669"/>
    <property type="project" value="Ensembl"/>
</dbReference>
<dbReference type="GO" id="GO:0048286">
    <property type="term" value="P:lung alveolus development"/>
    <property type="evidence" value="ECO:0007669"/>
    <property type="project" value="Ensembl"/>
</dbReference>
<dbReference type="GO" id="GO:0060056">
    <property type="term" value="P:mammary gland involution"/>
    <property type="evidence" value="ECO:0007669"/>
    <property type="project" value="Ensembl"/>
</dbReference>
<dbReference type="GO" id="GO:0030336">
    <property type="term" value="P:negative regulation of cell migration"/>
    <property type="evidence" value="ECO:0000314"/>
    <property type="project" value="BHF-UCL"/>
</dbReference>
<dbReference type="GO" id="GO:0045926">
    <property type="term" value="P:negative regulation of growth"/>
    <property type="evidence" value="ECO:0007669"/>
    <property type="project" value="Ensembl"/>
</dbReference>
<dbReference type="GO" id="GO:0043569">
    <property type="term" value="P:negative regulation of insulin-like growth factor receptor signaling pathway"/>
    <property type="evidence" value="ECO:0000314"/>
    <property type="project" value="BHF-UCL"/>
</dbReference>
<dbReference type="GO" id="GO:1901862">
    <property type="term" value="P:negative regulation of muscle tissue development"/>
    <property type="evidence" value="ECO:0007669"/>
    <property type="project" value="Ensembl"/>
</dbReference>
<dbReference type="GO" id="GO:0045668">
    <property type="term" value="P:negative regulation of osteoblast differentiation"/>
    <property type="evidence" value="ECO:0007669"/>
    <property type="project" value="Ensembl"/>
</dbReference>
<dbReference type="GO" id="GO:1904205">
    <property type="term" value="P:negative regulation of skeletal muscle hypertrophy"/>
    <property type="evidence" value="ECO:0007669"/>
    <property type="project" value="Ensembl"/>
</dbReference>
<dbReference type="GO" id="GO:0014912">
    <property type="term" value="P:negative regulation of smooth muscle cell migration"/>
    <property type="evidence" value="ECO:0000314"/>
    <property type="project" value="BHF-UCL"/>
</dbReference>
<dbReference type="GO" id="GO:0048662">
    <property type="term" value="P:negative regulation of smooth muscle cell proliferation"/>
    <property type="evidence" value="ECO:0000314"/>
    <property type="project" value="BHF-UCL"/>
</dbReference>
<dbReference type="GO" id="GO:0017148">
    <property type="term" value="P:negative regulation of translation"/>
    <property type="evidence" value="ECO:0000314"/>
    <property type="project" value="BHF-UCL"/>
</dbReference>
<dbReference type="GO" id="GO:0001649">
    <property type="term" value="P:osteoblast differentiation"/>
    <property type="evidence" value="ECO:0007669"/>
    <property type="project" value="Ensembl"/>
</dbReference>
<dbReference type="GO" id="GO:0043568">
    <property type="term" value="P:positive regulation of insulin-like growth factor receptor signaling pathway"/>
    <property type="evidence" value="ECO:0007669"/>
    <property type="project" value="Ensembl"/>
</dbReference>
<dbReference type="GO" id="GO:0051897">
    <property type="term" value="P:positive regulation of phosphatidylinositol 3-kinase/protein kinase B signal transduction"/>
    <property type="evidence" value="ECO:0007669"/>
    <property type="project" value="Ensembl"/>
</dbReference>
<dbReference type="GO" id="GO:1904754">
    <property type="term" value="P:positive regulation of vascular associated smooth muscle cell migration"/>
    <property type="evidence" value="ECO:0000316"/>
    <property type="project" value="BHF-UCL"/>
</dbReference>
<dbReference type="GO" id="GO:1904707">
    <property type="term" value="P:positive regulation of vascular associated smooth muscle cell proliferation"/>
    <property type="evidence" value="ECO:0000316"/>
    <property type="project" value="BHF-UCL"/>
</dbReference>
<dbReference type="GO" id="GO:0001558">
    <property type="term" value="P:regulation of cell growth"/>
    <property type="evidence" value="ECO:0007669"/>
    <property type="project" value="Ensembl"/>
</dbReference>
<dbReference type="GO" id="GO:0043567">
    <property type="term" value="P:regulation of insulin-like growth factor receptor signaling pathway"/>
    <property type="evidence" value="ECO:0000318"/>
    <property type="project" value="GO_Central"/>
</dbReference>
<dbReference type="GO" id="GO:0060416">
    <property type="term" value="P:response to growth hormone"/>
    <property type="evidence" value="ECO:0000250"/>
    <property type="project" value="AgBase"/>
</dbReference>
<dbReference type="GO" id="GO:0007165">
    <property type="term" value="P:signal transduction"/>
    <property type="evidence" value="ECO:0000303"/>
    <property type="project" value="ProtInc"/>
</dbReference>
<dbReference type="GO" id="GO:0051146">
    <property type="term" value="P:striated muscle cell differentiation"/>
    <property type="evidence" value="ECO:0007669"/>
    <property type="project" value="Ensembl"/>
</dbReference>
<dbReference type="GO" id="GO:0044342">
    <property type="term" value="P:type B pancreatic cell proliferation"/>
    <property type="evidence" value="ECO:0007669"/>
    <property type="project" value="Ensembl"/>
</dbReference>
<dbReference type="CDD" id="cd00191">
    <property type="entry name" value="TY"/>
    <property type="match status" value="1"/>
</dbReference>
<dbReference type="FunFam" id="4.10.40.20:FF:000001">
    <property type="entry name" value="Insulin-like growth factor binding protein 5"/>
    <property type="match status" value="1"/>
</dbReference>
<dbReference type="FunFam" id="4.10.800.10:FF:000005">
    <property type="entry name" value="Putative insulin-like growth factor-binding protein 5"/>
    <property type="match status" value="1"/>
</dbReference>
<dbReference type="Gene3D" id="4.10.40.20">
    <property type="match status" value="1"/>
</dbReference>
<dbReference type="Gene3D" id="4.10.800.10">
    <property type="entry name" value="Thyroglobulin type-1"/>
    <property type="match status" value="1"/>
</dbReference>
<dbReference type="InterPro" id="IPR009030">
    <property type="entry name" value="Growth_fac_rcpt_cys_sf"/>
</dbReference>
<dbReference type="InterPro" id="IPR012213">
    <property type="entry name" value="IGFBP-5"/>
</dbReference>
<dbReference type="InterPro" id="IPR000867">
    <property type="entry name" value="IGFBP-like"/>
</dbReference>
<dbReference type="InterPro" id="IPR022321">
    <property type="entry name" value="IGFBP_1-6_chordata"/>
</dbReference>
<dbReference type="InterPro" id="IPR017891">
    <property type="entry name" value="Insulin_GF-bd_Cys-rich_CS"/>
</dbReference>
<dbReference type="InterPro" id="IPR000716">
    <property type="entry name" value="Thyroglobulin_1"/>
</dbReference>
<dbReference type="InterPro" id="IPR036857">
    <property type="entry name" value="Thyroglobulin_1_sf"/>
</dbReference>
<dbReference type="PANTHER" id="PTHR11551">
    <property type="entry name" value="INSULIN-LIKE GROWTH FACTOR BINDING PROTEIN"/>
    <property type="match status" value="1"/>
</dbReference>
<dbReference type="PANTHER" id="PTHR11551:SF4">
    <property type="entry name" value="INSULIN-LIKE GROWTH FACTOR-BINDING PROTEIN 5"/>
    <property type="match status" value="1"/>
</dbReference>
<dbReference type="Pfam" id="PF00219">
    <property type="entry name" value="IGFBP"/>
    <property type="match status" value="1"/>
</dbReference>
<dbReference type="Pfam" id="PF00086">
    <property type="entry name" value="Thyroglobulin_1"/>
    <property type="match status" value="1"/>
</dbReference>
<dbReference type="PRINTS" id="PR01976">
    <property type="entry name" value="IGFBPFAMILY"/>
</dbReference>
<dbReference type="PRINTS" id="PR01981">
    <property type="entry name" value="IGFBPFAMILY5"/>
</dbReference>
<dbReference type="SMART" id="SM00121">
    <property type="entry name" value="IB"/>
    <property type="match status" value="1"/>
</dbReference>
<dbReference type="SMART" id="SM00211">
    <property type="entry name" value="TY"/>
    <property type="match status" value="1"/>
</dbReference>
<dbReference type="SUPFAM" id="SSF57184">
    <property type="entry name" value="Growth factor receptor domain"/>
    <property type="match status" value="1"/>
</dbReference>
<dbReference type="SUPFAM" id="SSF57610">
    <property type="entry name" value="Thyroglobulin type-1 domain"/>
    <property type="match status" value="1"/>
</dbReference>
<dbReference type="PROSITE" id="PS00222">
    <property type="entry name" value="IGFBP_N_1"/>
    <property type="match status" value="1"/>
</dbReference>
<dbReference type="PROSITE" id="PS51323">
    <property type="entry name" value="IGFBP_N_2"/>
    <property type="match status" value="1"/>
</dbReference>
<dbReference type="PROSITE" id="PS00484">
    <property type="entry name" value="THYROGLOBULIN_1_1"/>
    <property type="match status" value="1"/>
</dbReference>
<dbReference type="PROSITE" id="PS51162">
    <property type="entry name" value="THYROGLOBULIN_1_2"/>
    <property type="match status" value="1"/>
</dbReference>
<protein>
    <recommendedName>
        <fullName>Insulin-like growth factor-binding protein 5</fullName>
        <shortName>IBP-5</shortName>
        <shortName>IGF-binding protein 5</shortName>
        <shortName>IGFBP-5</shortName>
    </recommendedName>
</protein>
<feature type="signal peptide" evidence="2">
    <location>
        <begin position="1"/>
        <end position="20"/>
    </location>
</feature>
<feature type="chain" id="PRO_0000014385" description="Insulin-like growth factor-binding protein 5">
    <location>
        <begin position="21"/>
        <end position="272"/>
    </location>
</feature>
<feature type="domain" description="IGFBP N-terminal" evidence="4">
    <location>
        <begin position="23"/>
        <end position="103"/>
    </location>
</feature>
<feature type="domain" description="Thyroglobulin type-1" evidence="3">
    <location>
        <begin position="189"/>
        <end position="263"/>
    </location>
</feature>
<feature type="region of interest" description="Disordered" evidence="5">
    <location>
        <begin position="111"/>
        <end position="130"/>
    </location>
</feature>
<feature type="compositionally biased region" description="Basic and acidic residues" evidence="5">
    <location>
        <begin position="111"/>
        <end position="122"/>
    </location>
</feature>
<feature type="modified residue" description="Phosphoserine; by FAM20C" evidence="9">
    <location>
        <position position="116"/>
    </location>
</feature>
<feature type="glycosylation site" description="O-linked (HexNAc...) threonine" evidence="13">
    <location>
        <position position="172"/>
    </location>
</feature>
<feature type="disulfide bond" evidence="4">
    <location>
        <begin position="27"/>
        <end position="53"/>
    </location>
</feature>
<feature type="disulfide bond" evidence="4">
    <location>
        <begin position="30"/>
        <end position="55"/>
    </location>
</feature>
<feature type="disulfide bond" evidence="4">
    <location>
        <begin position="38"/>
        <end position="56"/>
    </location>
</feature>
<feature type="disulfide bond" evidence="4 8">
    <location>
        <begin position="45"/>
        <end position="59"/>
    </location>
</feature>
<feature type="disulfide bond" evidence="4 8">
    <location>
        <begin position="67"/>
        <end position="80"/>
    </location>
</feature>
<feature type="disulfide bond" evidence="4">
    <location>
        <begin position="74"/>
        <end position="100"/>
    </location>
</feature>
<feature type="disulfide bond" evidence="3 8">
    <location>
        <begin position="192"/>
        <end position="219"/>
    </location>
</feature>
<feature type="disulfide bond" evidence="3 8">
    <location>
        <begin position="230"/>
        <end position="241"/>
    </location>
</feature>
<feature type="disulfide bond" evidence="3 8">
    <location>
        <begin position="243"/>
        <end position="263"/>
    </location>
</feature>
<feature type="sequence variant" id="VAR_019284" description="In dbSNP:rs11575194." evidence="14">
    <original>R</original>
    <variation>W</variation>
    <location>
        <position position="138"/>
    </location>
</feature>
<feature type="strand" evidence="16">
    <location>
        <begin position="79"/>
        <end position="81"/>
    </location>
</feature>
<feature type="turn" evidence="15">
    <location>
        <begin position="84"/>
        <end position="86"/>
    </location>
</feature>
<feature type="helix" evidence="16">
    <location>
        <begin position="89"/>
        <end position="94"/>
    </location>
</feature>
<feature type="strand" evidence="16">
    <location>
        <begin position="98"/>
        <end position="101"/>
    </location>
</feature>
<feature type="helix" evidence="17">
    <location>
        <begin position="143"/>
        <end position="159"/>
    </location>
</feature>
<feature type="helix" evidence="17">
    <location>
        <begin position="160"/>
        <end position="162"/>
    </location>
</feature>
<evidence type="ECO:0000250" key="1">
    <source>
        <dbReference type="UniProtKB" id="Q07079"/>
    </source>
</evidence>
<evidence type="ECO:0000255" key="2"/>
<evidence type="ECO:0000255" key="3">
    <source>
        <dbReference type="PROSITE-ProRule" id="PRU00500"/>
    </source>
</evidence>
<evidence type="ECO:0000255" key="4">
    <source>
        <dbReference type="PROSITE-ProRule" id="PRU00653"/>
    </source>
</evidence>
<evidence type="ECO:0000256" key="5">
    <source>
        <dbReference type="SAM" id="MobiDB-lite"/>
    </source>
</evidence>
<evidence type="ECO:0000269" key="6">
    <source>
    </source>
</evidence>
<evidence type="ECO:0000269" key="7">
    <source>
    </source>
</evidence>
<evidence type="ECO:0000269" key="8">
    <source>
    </source>
</evidence>
<evidence type="ECO:0000269" key="9">
    <source>
    </source>
</evidence>
<evidence type="ECO:0000269" key="10">
    <source>
    </source>
</evidence>
<evidence type="ECO:0000269" key="11">
    <source>
    </source>
</evidence>
<evidence type="ECO:0000269" key="12">
    <source>
    </source>
</evidence>
<evidence type="ECO:0000269" key="13">
    <source>
    </source>
</evidence>
<evidence type="ECO:0000269" key="14">
    <source ref="6"/>
</evidence>
<evidence type="ECO:0007829" key="15">
    <source>
        <dbReference type="PDB" id="1BOE"/>
    </source>
</evidence>
<evidence type="ECO:0007829" key="16">
    <source>
        <dbReference type="PDB" id="1H59"/>
    </source>
</evidence>
<evidence type="ECO:0007829" key="17">
    <source>
        <dbReference type="PDB" id="7UFG"/>
    </source>
</evidence>
<keyword id="KW-0002">3D-structure</keyword>
<keyword id="KW-0963">Cytoplasm</keyword>
<keyword id="KW-0903">Direct protein sequencing</keyword>
<keyword id="KW-1015">Disulfide bond</keyword>
<keyword id="KW-0325">Glycoprotein</keyword>
<keyword id="KW-0340">Growth factor binding</keyword>
<keyword id="KW-0539">Nucleus</keyword>
<keyword id="KW-0597">Phosphoprotein</keyword>
<keyword id="KW-1267">Proteomics identification</keyword>
<keyword id="KW-1185">Reference proteome</keyword>
<keyword id="KW-0964">Secreted</keyword>
<keyword id="KW-0732">Signal</keyword>
<sequence length="272" mass="30570">MVLLTAVLLLLAAYAGPAQSLGSFVHCEPCDEKALSMCPPSPLGCELVKEPGCGCCMTCALAEGQSCGVYTERCAQGLRCLPRQDEEKPLHALLHGRGVCLNEKSYREQVKIERDSREHEEPTTSEMAEETYSPKIFRPKHTRISELKAEAVKKDRRKKLTQSKFVGGAENTAHPRIISAPEMRQESEQGPCRRHMEASLQELKASPRMVPRAVYLPNCDRKGFYKRKQCKPSRGRKRGICWCVDKYGMKLPGMEYVDGDFQCHTFDSSNVE</sequence>